<protein>
    <recommendedName>
        <fullName evidence="1">NADH-quinone oxidoreductase subunit A</fullName>
        <ecNumber evidence="1">7.1.1.-</ecNumber>
    </recommendedName>
    <alternativeName>
        <fullName evidence="1">NADH dehydrogenase I subunit A</fullName>
    </alternativeName>
    <alternativeName>
        <fullName evidence="1">NDH-1 subunit A</fullName>
    </alternativeName>
    <alternativeName>
        <fullName evidence="1">NUO1</fullName>
    </alternativeName>
</protein>
<reference key="1">
    <citation type="journal article" date="2005" name="PLoS Genet.">
        <title>Life in hot carbon monoxide: the complete genome sequence of Carboxydothermus hydrogenoformans Z-2901.</title>
        <authorList>
            <person name="Wu M."/>
            <person name="Ren Q."/>
            <person name="Durkin A.S."/>
            <person name="Daugherty S.C."/>
            <person name="Brinkac L.M."/>
            <person name="Dodson R.J."/>
            <person name="Madupu R."/>
            <person name="Sullivan S.A."/>
            <person name="Kolonay J.F."/>
            <person name="Nelson W.C."/>
            <person name="Tallon L.J."/>
            <person name="Jones K.M."/>
            <person name="Ulrich L.E."/>
            <person name="Gonzalez J.M."/>
            <person name="Zhulin I.B."/>
            <person name="Robb F.T."/>
            <person name="Eisen J.A."/>
        </authorList>
    </citation>
    <scope>NUCLEOTIDE SEQUENCE [LARGE SCALE GENOMIC DNA]</scope>
    <source>
        <strain>ATCC BAA-161 / DSM 6008 / Z-2901</strain>
    </source>
</reference>
<accession>Q3AC77</accession>
<proteinExistence type="inferred from homology"/>
<evidence type="ECO:0000255" key="1">
    <source>
        <dbReference type="HAMAP-Rule" id="MF_01394"/>
    </source>
</evidence>
<gene>
    <name evidence="1" type="primary">nuoA</name>
    <name type="ordered locus">CHY_1425</name>
</gene>
<comment type="function">
    <text evidence="1">NDH-1 shuttles electrons from NADH, via FMN and iron-sulfur (Fe-S) centers, to quinones in the respiratory chain. The immediate electron acceptor for the enzyme in this species is believed to be a menaquinone. Couples the redox reaction to proton translocation (for every two electrons transferred, four hydrogen ions are translocated across the cytoplasmic membrane), and thus conserves the redox energy in a proton gradient.</text>
</comment>
<comment type="catalytic activity">
    <reaction evidence="1">
        <text>a quinone + NADH + 5 H(+)(in) = a quinol + NAD(+) + 4 H(+)(out)</text>
        <dbReference type="Rhea" id="RHEA:57888"/>
        <dbReference type="ChEBI" id="CHEBI:15378"/>
        <dbReference type="ChEBI" id="CHEBI:24646"/>
        <dbReference type="ChEBI" id="CHEBI:57540"/>
        <dbReference type="ChEBI" id="CHEBI:57945"/>
        <dbReference type="ChEBI" id="CHEBI:132124"/>
    </reaction>
</comment>
<comment type="subunit">
    <text evidence="1">NDH-1 is composed of 14 different subunits. Subunits NuoA, H, J, K, L, M, N constitute the membrane sector of the complex.</text>
</comment>
<comment type="subcellular location">
    <subcellularLocation>
        <location evidence="1">Cell membrane</location>
        <topology evidence="1">Multi-pass membrane protein</topology>
    </subcellularLocation>
</comment>
<comment type="similarity">
    <text evidence="1">Belongs to the complex I subunit 3 family.</text>
</comment>
<name>NUOA_CARHZ</name>
<organism>
    <name type="scientific">Carboxydothermus hydrogenoformans (strain ATCC BAA-161 / DSM 6008 / Z-2901)</name>
    <dbReference type="NCBI Taxonomy" id="246194"/>
    <lineage>
        <taxon>Bacteria</taxon>
        <taxon>Bacillati</taxon>
        <taxon>Bacillota</taxon>
        <taxon>Clostridia</taxon>
        <taxon>Thermoanaerobacterales</taxon>
        <taxon>Thermoanaerobacteraceae</taxon>
        <taxon>Carboxydothermus</taxon>
    </lineage>
</organism>
<dbReference type="EC" id="7.1.1.-" evidence="1"/>
<dbReference type="EMBL" id="CP000141">
    <property type="protein sequence ID" value="ABB13790.1"/>
    <property type="molecule type" value="Genomic_DNA"/>
</dbReference>
<dbReference type="RefSeq" id="WP_011344332.1">
    <property type="nucleotide sequence ID" value="NC_007503.1"/>
</dbReference>
<dbReference type="SMR" id="Q3AC77"/>
<dbReference type="STRING" id="246194.CHY_1425"/>
<dbReference type="KEGG" id="chy:CHY_1425"/>
<dbReference type="eggNOG" id="COG0838">
    <property type="taxonomic scope" value="Bacteria"/>
</dbReference>
<dbReference type="HOGENOM" id="CLU_119549_1_2_9"/>
<dbReference type="InParanoid" id="Q3AC77"/>
<dbReference type="OrthoDB" id="9791970at2"/>
<dbReference type="Proteomes" id="UP000002706">
    <property type="component" value="Chromosome"/>
</dbReference>
<dbReference type="GO" id="GO:0030964">
    <property type="term" value="C:NADH dehydrogenase complex"/>
    <property type="evidence" value="ECO:0007669"/>
    <property type="project" value="TreeGrafter"/>
</dbReference>
<dbReference type="GO" id="GO:0005886">
    <property type="term" value="C:plasma membrane"/>
    <property type="evidence" value="ECO:0007669"/>
    <property type="project" value="UniProtKB-SubCell"/>
</dbReference>
<dbReference type="GO" id="GO:0008137">
    <property type="term" value="F:NADH dehydrogenase (ubiquinone) activity"/>
    <property type="evidence" value="ECO:0007669"/>
    <property type="project" value="InterPro"/>
</dbReference>
<dbReference type="GO" id="GO:0050136">
    <property type="term" value="F:NADH:ubiquinone reductase (non-electrogenic) activity"/>
    <property type="evidence" value="ECO:0007669"/>
    <property type="project" value="UniProtKB-UniRule"/>
</dbReference>
<dbReference type="GO" id="GO:0048038">
    <property type="term" value="F:quinone binding"/>
    <property type="evidence" value="ECO:0007669"/>
    <property type="project" value="UniProtKB-KW"/>
</dbReference>
<dbReference type="Gene3D" id="1.20.58.1610">
    <property type="entry name" value="NADH:ubiquinone/plastoquinone oxidoreductase, chain 3"/>
    <property type="match status" value="1"/>
</dbReference>
<dbReference type="HAMAP" id="MF_01394">
    <property type="entry name" value="NDH1_NuoA"/>
    <property type="match status" value="1"/>
</dbReference>
<dbReference type="InterPro" id="IPR023043">
    <property type="entry name" value="NAD(P)H_OxRDtase_bac/plastid"/>
</dbReference>
<dbReference type="InterPro" id="IPR000440">
    <property type="entry name" value="NADH_UbQ/plastoQ_OxRdtase_su3"/>
</dbReference>
<dbReference type="InterPro" id="IPR038430">
    <property type="entry name" value="NDAH_ubi_oxred_su3_sf"/>
</dbReference>
<dbReference type="PANTHER" id="PTHR11058">
    <property type="entry name" value="NADH-UBIQUINONE OXIDOREDUCTASE CHAIN 3"/>
    <property type="match status" value="1"/>
</dbReference>
<dbReference type="PANTHER" id="PTHR11058:SF9">
    <property type="entry name" value="NADH-UBIQUINONE OXIDOREDUCTASE CHAIN 3"/>
    <property type="match status" value="1"/>
</dbReference>
<dbReference type="Pfam" id="PF00507">
    <property type="entry name" value="Oxidored_q4"/>
    <property type="match status" value="1"/>
</dbReference>
<sequence>MLSPKGAILIFFLTGFFLSIIILVLNYLLSPKSKSLIKRETYECGLETIGPTWVQFKGNYFMYALVFVLFDVETIFLYPWAVRFNVLGLFAFVEMVIFIGILVLGLWYAWKEGALEWK</sequence>
<feature type="chain" id="PRO_0000362653" description="NADH-quinone oxidoreductase subunit A">
    <location>
        <begin position="1"/>
        <end position="118"/>
    </location>
</feature>
<feature type="transmembrane region" description="Helical" evidence="1">
    <location>
        <begin position="8"/>
        <end position="28"/>
    </location>
</feature>
<feature type="transmembrane region" description="Helical" evidence="1">
    <location>
        <begin position="61"/>
        <end position="81"/>
    </location>
</feature>
<feature type="transmembrane region" description="Helical" evidence="1">
    <location>
        <begin position="86"/>
        <end position="106"/>
    </location>
</feature>
<keyword id="KW-1003">Cell membrane</keyword>
<keyword id="KW-0472">Membrane</keyword>
<keyword id="KW-0520">NAD</keyword>
<keyword id="KW-0874">Quinone</keyword>
<keyword id="KW-1185">Reference proteome</keyword>
<keyword id="KW-1278">Translocase</keyword>
<keyword id="KW-0812">Transmembrane</keyword>
<keyword id="KW-1133">Transmembrane helix</keyword>
<keyword id="KW-0813">Transport</keyword>